<proteinExistence type="inferred from homology"/>
<feature type="chain" id="PRO_1000116101" description="Large ribosomal subunit protein eL43">
    <location>
        <begin position="1"/>
        <end position="96"/>
    </location>
</feature>
<feature type="zinc finger region" description="C4-type" evidence="1">
    <location>
        <begin position="41"/>
        <end position="62"/>
    </location>
</feature>
<comment type="cofactor">
    <cofactor evidence="1">
        <name>Zn(2+)</name>
        <dbReference type="ChEBI" id="CHEBI:29105"/>
    </cofactor>
    <text evidence="1">Binds 1 zinc ion per subunit.</text>
</comment>
<comment type="similarity">
    <text evidence="1">Belongs to the eukaryotic ribosomal protein eL43 family.</text>
</comment>
<accession>A9A848</accession>
<keyword id="KW-0479">Metal-binding</keyword>
<keyword id="KW-0687">Ribonucleoprotein</keyword>
<keyword id="KW-0689">Ribosomal protein</keyword>
<keyword id="KW-0694">RNA-binding</keyword>
<keyword id="KW-0862">Zinc</keyword>
<keyword id="KW-0863">Zinc-finger</keyword>
<evidence type="ECO:0000255" key="1">
    <source>
        <dbReference type="HAMAP-Rule" id="MF_00327"/>
    </source>
</evidence>
<evidence type="ECO:0000305" key="2"/>
<reference key="1">
    <citation type="submission" date="2007-10" db="EMBL/GenBank/DDBJ databases">
        <title>Complete sequence of Methanococcus maripaludis C6.</title>
        <authorList>
            <consortium name="US DOE Joint Genome Institute"/>
            <person name="Copeland A."/>
            <person name="Lucas S."/>
            <person name="Lapidus A."/>
            <person name="Barry K."/>
            <person name="Glavina del Rio T."/>
            <person name="Dalin E."/>
            <person name="Tice H."/>
            <person name="Pitluck S."/>
            <person name="Clum A."/>
            <person name="Schmutz J."/>
            <person name="Larimer F."/>
            <person name="Land M."/>
            <person name="Hauser L."/>
            <person name="Kyrpides N."/>
            <person name="Mikhailova N."/>
            <person name="Sieprawska-Lupa M."/>
            <person name="Whitman W.B."/>
            <person name="Richardson P."/>
        </authorList>
    </citation>
    <scope>NUCLEOTIDE SEQUENCE [LARGE SCALE GENOMIC DNA]</scope>
    <source>
        <strain>C6 / ATCC BAA-1332</strain>
    </source>
</reference>
<gene>
    <name evidence="1" type="primary">rpl37ae</name>
    <name type="ordered locus">MmarC6_0704</name>
</gene>
<dbReference type="EMBL" id="CP000867">
    <property type="protein sequence ID" value="ABX01521.1"/>
    <property type="molecule type" value="Genomic_DNA"/>
</dbReference>
<dbReference type="SMR" id="A9A848"/>
<dbReference type="STRING" id="444158.MmarC6_0704"/>
<dbReference type="KEGG" id="mmx:MmarC6_0704"/>
<dbReference type="eggNOG" id="arCOG04208">
    <property type="taxonomic scope" value="Archaea"/>
</dbReference>
<dbReference type="HOGENOM" id="CLU_141199_2_0_2"/>
<dbReference type="OrthoDB" id="372011at2157"/>
<dbReference type="PhylomeDB" id="A9A848"/>
<dbReference type="GO" id="GO:1990904">
    <property type="term" value="C:ribonucleoprotein complex"/>
    <property type="evidence" value="ECO:0007669"/>
    <property type="project" value="UniProtKB-KW"/>
</dbReference>
<dbReference type="GO" id="GO:0005840">
    <property type="term" value="C:ribosome"/>
    <property type="evidence" value="ECO:0007669"/>
    <property type="project" value="UniProtKB-KW"/>
</dbReference>
<dbReference type="GO" id="GO:0070180">
    <property type="term" value="F:large ribosomal subunit rRNA binding"/>
    <property type="evidence" value="ECO:0007669"/>
    <property type="project" value="UniProtKB-UniRule"/>
</dbReference>
<dbReference type="GO" id="GO:0003735">
    <property type="term" value="F:structural constituent of ribosome"/>
    <property type="evidence" value="ECO:0007669"/>
    <property type="project" value="InterPro"/>
</dbReference>
<dbReference type="GO" id="GO:0008270">
    <property type="term" value="F:zinc ion binding"/>
    <property type="evidence" value="ECO:0007669"/>
    <property type="project" value="UniProtKB-UniRule"/>
</dbReference>
<dbReference type="GO" id="GO:0006412">
    <property type="term" value="P:translation"/>
    <property type="evidence" value="ECO:0007669"/>
    <property type="project" value="UniProtKB-UniRule"/>
</dbReference>
<dbReference type="Gene3D" id="2.20.25.30">
    <property type="match status" value="1"/>
</dbReference>
<dbReference type="HAMAP" id="MF_00327">
    <property type="entry name" value="Ribosomal_eL43"/>
    <property type="match status" value="1"/>
</dbReference>
<dbReference type="InterPro" id="IPR011331">
    <property type="entry name" value="Ribosomal_eL37/eL43"/>
</dbReference>
<dbReference type="InterPro" id="IPR002674">
    <property type="entry name" value="Ribosomal_eL43"/>
</dbReference>
<dbReference type="InterPro" id="IPR050522">
    <property type="entry name" value="Ribosomal_protein_eL43"/>
</dbReference>
<dbReference type="InterPro" id="IPR011332">
    <property type="entry name" value="Ribosomal_zn-bd"/>
</dbReference>
<dbReference type="NCBIfam" id="TIGR00280">
    <property type="entry name" value="eL43_euk_arch"/>
    <property type="match status" value="1"/>
</dbReference>
<dbReference type="NCBIfam" id="NF003058">
    <property type="entry name" value="PRK03976.1"/>
    <property type="match status" value="1"/>
</dbReference>
<dbReference type="PANTHER" id="PTHR48129">
    <property type="entry name" value="60S RIBOSOMAL PROTEIN L37A"/>
    <property type="match status" value="1"/>
</dbReference>
<dbReference type="PANTHER" id="PTHR48129:SF1">
    <property type="entry name" value="LARGE RIBOSOMAL SUBUNIT PROTEIN EL43"/>
    <property type="match status" value="1"/>
</dbReference>
<dbReference type="Pfam" id="PF01780">
    <property type="entry name" value="Ribosomal_L37ae"/>
    <property type="match status" value="1"/>
</dbReference>
<dbReference type="SUPFAM" id="SSF57829">
    <property type="entry name" value="Zn-binding ribosomal proteins"/>
    <property type="match status" value="1"/>
</dbReference>
<organism>
    <name type="scientific">Methanococcus maripaludis (strain C6 / ATCC BAA-1332)</name>
    <dbReference type="NCBI Taxonomy" id="444158"/>
    <lineage>
        <taxon>Archaea</taxon>
        <taxon>Methanobacteriati</taxon>
        <taxon>Methanobacteriota</taxon>
        <taxon>Methanomada group</taxon>
        <taxon>Methanococci</taxon>
        <taxon>Methanococcales</taxon>
        <taxon>Methanococcaceae</taxon>
        <taxon>Methanococcus</taxon>
    </lineage>
</organism>
<sequence length="96" mass="10717">MVEFSHTKKIGSAGRFGSRYGRKIRVRLRDVEIKQKKEYKCPVCAFPKLKRVGTSIWVCDKCGAKIAGGAYTPETGAGKVVTKAIRRVIESKSREI</sequence>
<name>RL37A_METM6</name>
<protein>
    <recommendedName>
        <fullName evidence="1">Large ribosomal subunit protein eL43</fullName>
    </recommendedName>
    <alternativeName>
        <fullName evidence="2">50S ribosomal protein L37Ae</fullName>
    </alternativeName>
    <alternativeName>
        <fullName evidence="1">Ribosomal protein L43e</fullName>
    </alternativeName>
</protein>